<organism>
    <name type="scientific">Mesoplasma florum (strain ATCC 33453 / NBRC 100688 / NCTC 11704 / L1)</name>
    <name type="common">Acholeplasma florum</name>
    <dbReference type="NCBI Taxonomy" id="265311"/>
    <lineage>
        <taxon>Bacteria</taxon>
        <taxon>Bacillati</taxon>
        <taxon>Mycoplasmatota</taxon>
        <taxon>Mollicutes</taxon>
        <taxon>Entomoplasmatales</taxon>
        <taxon>Entomoplasmataceae</taxon>
        <taxon>Mesoplasma</taxon>
    </lineage>
</organism>
<accession>Q6F168</accession>
<reference key="1">
    <citation type="submission" date="2004-06" db="EMBL/GenBank/DDBJ databases">
        <authorList>
            <person name="Birren B.W."/>
            <person name="Stange-Thomann N."/>
            <person name="Hafez N."/>
            <person name="DeCaprio D."/>
            <person name="Fisher S."/>
            <person name="Butler J."/>
            <person name="Elkins T."/>
            <person name="Kodira C.D."/>
            <person name="Major J."/>
            <person name="Wang S."/>
            <person name="Nicol R."/>
            <person name="Nusbaum C."/>
        </authorList>
    </citation>
    <scope>NUCLEOTIDE SEQUENCE [LARGE SCALE GENOMIC DNA]</scope>
    <source>
        <strain>ATCC 33453 / NBRC 100688 / NCTC 11704 / L1</strain>
    </source>
</reference>
<keyword id="KW-1185">Reference proteome</keyword>
<keyword id="KW-0687">Ribonucleoprotein</keyword>
<keyword id="KW-0689">Ribosomal protein</keyword>
<name>RL32_MESFL</name>
<protein>
    <recommendedName>
        <fullName evidence="1">Large ribosomal subunit protein bL32</fullName>
    </recommendedName>
    <alternativeName>
        <fullName evidence="2">50S ribosomal protein L32</fullName>
    </alternativeName>
</protein>
<gene>
    <name evidence="1" type="primary">rpmF</name>
    <name type="ordered locus">Mfl396</name>
</gene>
<comment type="similarity">
    <text evidence="1">Belongs to the bacterial ribosomal protein bL32 family.</text>
</comment>
<sequence length="59" mass="6612">MAVPFRKTSKSAKNKRRSHLALVASNLVSCENCGSMIKPHRVCRECGFYKGKEVKSVQD</sequence>
<proteinExistence type="inferred from homology"/>
<feature type="chain" id="PRO_0000225737" description="Large ribosomal subunit protein bL32">
    <location>
        <begin position="1"/>
        <end position="59"/>
    </location>
</feature>
<dbReference type="EMBL" id="AE017263">
    <property type="protein sequence ID" value="AAT75755.1"/>
    <property type="molecule type" value="Genomic_DNA"/>
</dbReference>
<dbReference type="RefSeq" id="WP_011183295.1">
    <property type="nucleotide sequence ID" value="NC_006055.1"/>
</dbReference>
<dbReference type="RefSeq" id="YP_053639.1">
    <property type="nucleotide sequence ID" value="NC_006055.1"/>
</dbReference>
<dbReference type="SMR" id="Q6F168"/>
<dbReference type="STRING" id="265311.Mfl396"/>
<dbReference type="PaxDb" id="265311-Mfl396"/>
<dbReference type="EnsemblBacteria" id="AAT75755">
    <property type="protein sequence ID" value="AAT75755"/>
    <property type="gene ID" value="Mfl396"/>
</dbReference>
<dbReference type="GeneID" id="2898103"/>
<dbReference type="KEGG" id="mfl:Mfl396"/>
<dbReference type="PATRIC" id="fig|265311.5.peg.396"/>
<dbReference type="eggNOG" id="COG0333">
    <property type="taxonomic scope" value="Bacteria"/>
</dbReference>
<dbReference type="HOGENOM" id="CLU_129084_1_3_14"/>
<dbReference type="OrthoDB" id="9812874at2"/>
<dbReference type="Proteomes" id="UP000006647">
    <property type="component" value="Chromosome"/>
</dbReference>
<dbReference type="GO" id="GO:0015934">
    <property type="term" value="C:large ribosomal subunit"/>
    <property type="evidence" value="ECO:0007669"/>
    <property type="project" value="InterPro"/>
</dbReference>
<dbReference type="GO" id="GO:0003735">
    <property type="term" value="F:structural constituent of ribosome"/>
    <property type="evidence" value="ECO:0007669"/>
    <property type="project" value="InterPro"/>
</dbReference>
<dbReference type="GO" id="GO:0006412">
    <property type="term" value="P:translation"/>
    <property type="evidence" value="ECO:0007669"/>
    <property type="project" value="UniProtKB-UniRule"/>
</dbReference>
<dbReference type="Gene3D" id="1.20.5.640">
    <property type="entry name" value="Single helix bin"/>
    <property type="match status" value="1"/>
</dbReference>
<dbReference type="HAMAP" id="MF_00340">
    <property type="entry name" value="Ribosomal_bL32"/>
    <property type="match status" value="1"/>
</dbReference>
<dbReference type="InterPro" id="IPR002677">
    <property type="entry name" value="Ribosomal_bL32"/>
</dbReference>
<dbReference type="InterPro" id="IPR044957">
    <property type="entry name" value="Ribosomal_bL32_bact"/>
</dbReference>
<dbReference type="InterPro" id="IPR011332">
    <property type="entry name" value="Ribosomal_zn-bd"/>
</dbReference>
<dbReference type="NCBIfam" id="TIGR01031">
    <property type="entry name" value="rpmF_bact"/>
    <property type="match status" value="1"/>
</dbReference>
<dbReference type="PANTHER" id="PTHR35534">
    <property type="entry name" value="50S RIBOSOMAL PROTEIN L32"/>
    <property type="match status" value="1"/>
</dbReference>
<dbReference type="PANTHER" id="PTHR35534:SF1">
    <property type="entry name" value="LARGE RIBOSOMAL SUBUNIT PROTEIN BL32"/>
    <property type="match status" value="1"/>
</dbReference>
<dbReference type="Pfam" id="PF01783">
    <property type="entry name" value="Ribosomal_L32p"/>
    <property type="match status" value="1"/>
</dbReference>
<dbReference type="SUPFAM" id="SSF57829">
    <property type="entry name" value="Zn-binding ribosomal proteins"/>
    <property type="match status" value="1"/>
</dbReference>
<evidence type="ECO:0000255" key="1">
    <source>
        <dbReference type="HAMAP-Rule" id="MF_00340"/>
    </source>
</evidence>
<evidence type="ECO:0000305" key="2"/>